<gene>
    <name evidence="1" type="primary">ackA</name>
    <name type="ordered locus">Spro_3316</name>
</gene>
<name>ACKA_SERP5</name>
<comment type="function">
    <text evidence="1">Catalyzes the formation of acetyl phosphate from acetate and ATP. Can also catalyze the reverse reaction.</text>
</comment>
<comment type="catalytic activity">
    <reaction evidence="1">
        <text>acetate + ATP = acetyl phosphate + ADP</text>
        <dbReference type="Rhea" id="RHEA:11352"/>
        <dbReference type="ChEBI" id="CHEBI:22191"/>
        <dbReference type="ChEBI" id="CHEBI:30089"/>
        <dbReference type="ChEBI" id="CHEBI:30616"/>
        <dbReference type="ChEBI" id="CHEBI:456216"/>
        <dbReference type="EC" id="2.7.2.1"/>
    </reaction>
</comment>
<comment type="cofactor">
    <cofactor evidence="1">
        <name>Mg(2+)</name>
        <dbReference type="ChEBI" id="CHEBI:18420"/>
    </cofactor>
    <cofactor evidence="1">
        <name>Mn(2+)</name>
        <dbReference type="ChEBI" id="CHEBI:29035"/>
    </cofactor>
    <text evidence="1">Mg(2+). Can also accept Mn(2+).</text>
</comment>
<comment type="pathway">
    <text evidence="1">Metabolic intermediate biosynthesis; acetyl-CoA biosynthesis; acetyl-CoA from acetate: step 1/2.</text>
</comment>
<comment type="subunit">
    <text evidence="1">Homodimer.</text>
</comment>
<comment type="subcellular location">
    <subcellularLocation>
        <location evidence="1">Cytoplasm</location>
    </subcellularLocation>
</comment>
<comment type="similarity">
    <text evidence="1">Belongs to the acetokinase family.</text>
</comment>
<keyword id="KW-0067">ATP-binding</keyword>
<keyword id="KW-0963">Cytoplasm</keyword>
<keyword id="KW-0418">Kinase</keyword>
<keyword id="KW-0460">Magnesium</keyword>
<keyword id="KW-0479">Metal-binding</keyword>
<keyword id="KW-0547">Nucleotide-binding</keyword>
<keyword id="KW-0808">Transferase</keyword>
<feature type="chain" id="PRO_1000057186" description="Acetate kinase">
    <location>
        <begin position="1"/>
        <end position="400"/>
    </location>
</feature>
<feature type="active site" description="Proton donor/acceptor" evidence="1">
    <location>
        <position position="150"/>
    </location>
</feature>
<feature type="binding site" evidence="1">
    <location>
        <position position="10"/>
    </location>
    <ligand>
        <name>Mg(2+)</name>
        <dbReference type="ChEBI" id="CHEBI:18420"/>
    </ligand>
</feature>
<feature type="binding site" evidence="1">
    <location>
        <position position="17"/>
    </location>
    <ligand>
        <name>ATP</name>
        <dbReference type="ChEBI" id="CHEBI:30616"/>
    </ligand>
</feature>
<feature type="binding site" evidence="1">
    <location>
        <position position="91"/>
    </location>
    <ligand>
        <name>substrate</name>
    </ligand>
</feature>
<feature type="binding site" evidence="1">
    <location>
        <begin position="210"/>
        <end position="214"/>
    </location>
    <ligand>
        <name>ATP</name>
        <dbReference type="ChEBI" id="CHEBI:30616"/>
    </ligand>
</feature>
<feature type="binding site" evidence="1">
    <location>
        <begin position="285"/>
        <end position="287"/>
    </location>
    <ligand>
        <name>ATP</name>
        <dbReference type="ChEBI" id="CHEBI:30616"/>
    </ligand>
</feature>
<feature type="binding site" evidence="1">
    <location>
        <begin position="333"/>
        <end position="337"/>
    </location>
    <ligand>
        <name>ATP</name>
        <dbReference type="ChEBI" id="CHEBI:30616"/>
    </ligand>
</feature>
<feature type="binding site" evidence="1">
    <location>
        <position position="387"/>
    </location>
    <ligand>
        <name>Mg(2+)</name>
        <dbReference type="ChEBI" id="CHEBI:18420"/>
    </ligand>
</feature>
<feature type="site" description="Transition state stabilizer" evidence="1">
    <location>
        <position position="182"/>
    </location>
</feature>
<feature type="site" description="Transition state stabilizer" evidence="1">
    <location>
        <position position="243"/>
    </location>
</feature>
<evidence type="ECO:0000255" key="1">
    <source>
        <dbReference type="HAMAP-Rule" id="MF_00020"/>
    </source>
</evidence>
<reference key="1">
    <citation type="submission" date="2007-09" db="EMBL/GenBank/DDBJ databases">
        <title>Complete sequence of chromosome of Serratia proteamaculans 568.</title>
        <authorList>
            <consortium name="US DOE Joint Genome Institute"/>
            <person name="Copeland A."/>
            <person name="Lucas S."/>
            <person name="Lapidus A."/>
            <person name="Barry K."/>
            <person name="Glavina del Rio T."/>
            <person name="Dalin E."/>
            <person name="Tice H."/>
            <person name="Pitluck S."/>
            <person name="Chain P."/>
            <person name="Malfatti S."/>
            <person name="Shin M."/>
            <person name="Vergez L."/>
            <person name="Schmutz J."/>
            <person name="Larimer F."/>
            <person name="Land M."/>
            <person name="Hauser L."/>
            <person name="Kyrpides N."/>
            <person name="Kim E."/>
            <person name="Taghavi S."/>
            <person name="Newman L."/>
            <person name="Vangronsveld J."/>
            <person name="van der Lelie D."/>
            <person name="Richardson P."/>
        </authorList>
    </citation>
    <scope>NUCLEOTIDE SEQUENCE [LARGE SCALE GENOMIC DNA]</scope>
    <source>
        <strain>568</strain>
    </source>
</reference>
<proteinExistence type="inferred from homology"/>
<dbReference type="EC" id="2.7.2.1" evidence="1"/>
<dbReference type="EMBL" id="CP000826">
    <property type="protein sequence ID" value="ABV42414.1"/>
    <property type="molecule type" value="Genomic_DNA"/>
</dbReference>
<dbReference type="SMR" id="A8GH24"/>
<dbReference type="STRING" id="399741.Spro_3316"/>
<dbReference type="KEGG" id="spe:Spro_3316"/>
<dbReference type="eggNOG" id="COG0282">
    <property type="taxonomic scope" value="Bacteria"/>
</dbReference>
<dbReference type="HOGENOM" id="CLU_020352_0_1_6"/>
<dbReference type="OrthoDB" id="9802453at2"/>
<dbReference type="UniPathway" id="UPA00340">
    <property type="reaction ID" value="UER00458"/>
</dbReference>
<dbReference type="GO" id="GO:0005829">
    <property type="term" value="C:cytosol"/>
    <property type="evidence" value="ECO:0007669"/>
    <property type="project" value="TreeGrafter"/>
</dbReference>
<dbReference type="GO" id="GO:0008776">
    <property type="term" value="F:acetate kinase activity"/>
    <property type="evidence" value="ECO:0007669"/>
    <property type="project" value="UniProtKB-UniRule"/>
</dbReference>
<dbReference type="GO" id="GO:0005524">
    <property type="term" value="F:ATP binding"/>
    <property type="evidence" value="ECO:0007669"/>
    <property type="project" value="UniProtKB-KW"/>
</dbReference>
<dbReference type="GO" id="GO:0000287">
    <property type="term" value="F:magnesium ion binding"/>
    <property type="evidence" value="ECO:0007669"/>
    <property type="project" value="UniProtKB-UniRule"/>
</dbReference>
<dbReference type="GO" id="GO:0006083">
    <property type="term" value="P:acetate metabolic process"/>
    <property type="evidence" value="ECO:0007669"/>
    <property type="project" value="TreeGrafter"/>
</dbReference>
<dbReference type="GO" id="GO:0006085">
    <property type="term" value="P:acetyl-CoA biosynthetic process"/>
    <property type="evidence" value="ECO:0007669"/>
    <property type="project" value="UniProtKB-UniRule"/>
</dbReference>
<dbReference type="CDD" id="cd24010">
    <property type="entry name" value="ASKHA_NBD_AcK_PK"/>
    <property type="match status" value="1"/>
</dbReference>
<dbReference type="FunFam" id="3.30.420.40:FF:000041">
    <property type="entry name" value="Acetate kinase"/>
    <property type="match status" value="1"/>
</dbReference>
<dbReference type="FunFam" id="3.30.420.40:FF:000042">
    <property type="entry name" value="Acetate kinase"/>
    <property type="match status" value="1"/>
</dbReference>
<dbReference type="Gene3D" id="3.30.420.40">
    <property type="match status" value="2"/>
</dbReference>
<dbReference type="HAMAP" id="MF_00020">
    <property type="entry name" value="Acetate_kinase"/>
    <property type="match status" value="1"/>
</dbReference>
<dbReference type="InterPro" id="IPR004372">
    <property type="entry name" value="Ac/propionate_kinase"/>
</dbReference>
<dbReference type="InterPro" id="IPR000890">
    <property type="entry name" value="Aliphatic_acid_kin_short-chain"/>
</dbReference>
<dbReference type="InterPro" id="IPR023865">
    <property type="entry name" value="Aliphatic_acid_kinase_CS"/>
</dbReference>
<dbReference type="InterPro" id="IPR043129">
    <property type="entry name" value="ATPase_NBD"/>
</dbReference>
<dbReference type="NCBIfam" id="TIGR00016">
    <property type="entry name" value="ackA"/>
    <property type="match status" value="1"/>
</dbReference>
<dbReference type="PANTHER" id="PTHR21060">
    <property type="entry name" value="ACETATE KINASE"/>
    <property type="match status" value="1"/>
</dbReference>
<dbReference type="PANTHER" id="PTHR21060:SF21">
    <property type="entry name" value="ACETATE KINASE"/>
    <property type="match status" value="1"/>
</dbReference>
<dbReference type="Pfam" id="PF00871">
    <property type="entry name" value="Acetate_kinase"/>
    <property type="match status" value="1"/>
</dbReference>
<dbReference type="PIRSF" id="PIRSF000722">
    <property type="entry name" value="Acetate_prop_kin"/>
    <property type="match status" value="1"/>
</dbReference>
<dbReference type="PRINTS" id="PR00471">
    <property type="entry name" value="ACETATEKNASE"/>
</dbReference>
<dbReference type="SUPFAM" id="SSF53067">
    <property type="entry name" value="Actin-like ATPase domain"/>
    <property type="match status" value="2"/>
</dbReference>
<dbReference type="PROSITE" id="PS01075">
    <property type="entry name" value="ACETATE_KINASE_1"/>
    <property type="match status" value="1"/>
</dbReference>
<dbReference type="PROSITE" id="PS01076">
    <property type="entry name" value="ACETATE_KINASE_2"/>
    <property type="match status" value="1"/>
</dbReference>
<sequence length="400" mass="43128">MSSKLVLVLNCGSSSLKFAIIDAVNGEEHLSGLAECFHLPEARLKWKMDGAKHEAALGAGAAHSEALNYIVNTILAQKPELSAQLTAIGHRIVHGGEKFTASAVINDEVLQGIKDSVPFAPLHNPAHLIGIAEALKSFPKLADKNVAVFDTAFHQTMPEESYLYALPYSLYRDHSVRRYGAHGTSHFYVTQEAAKALNKPVEEVNLITCHLGNGGSVTAVRNGKCVDTSMGLTPLEGLVMGTRSGDIDPAIIFHLHDSLGMSVDQINKMLTKESGLLGLTEVTSDCRYVEDNYESKADAKRAMDVFCHRLAKYIGAYSALMDGRLDAVIFTGGIGENAGMVRELTLNKLGLLGFEIDHERNMAARFGKSGAITKDGSRLALVIPTNEELVIAQDASRLTA</sequence>
<accession>A8GH24</accession>
<protein>
    <recommendedName>
        <fullName evidence="1">Acetate kinase</fullName>
        <ecNumber evidence="1">2.7.2.1</ecNumber>
    </recommendedName>
    <alternativeName>
        <fullName evidence="1">Acetokinase</fullName>
    </alternativeName>
</protein>
<organism>
    <name type="scientific">Serratia proteamaculans (strain 568)</name>
    <dbReference type="NCBI Taxonomy" id="399741"/>
    <lineage>
        <taxon>Bacteria</taxon>
        <taxon>Pseudomonadati</taxon>
        <taxon>Pseudomonadota</taxon>
        <taxon>Gammaproteobacteria</taxon>
        <taxon>Enterobacterales</taxon>
        <taxon>Yersiniaceae</taxon>
        <taxon>Serratia</taxon>
    </lineage>
</organism>